<feature type="chain" id="PRO_0000229312" description="ATP phosphoribosyltransferase">
    <location>
        <begin position="1"/>
        <end position="217"/>
    </location>
</feature>
<name>HIS1_BURL3</name>
<gene>
    <name evidence="1" type="primary">hisG</name>
    <name type="ordered locus">Bcep18194_A3522</name>
</gene>
<organism>
    <name type="scientific">Burkholderia lata (strain ATCC 17760 / DSM 23089 / LMG 22485 / NCIMB 9086 / R18194 / 383)</name>
    <dbReference type="NCBI Taxonomy" id="482957"/>
    <lineage>
        <taxon>Bacteria</taxon>
        <taxon>Pseudomonadati</taxon>
        <taxon>Pseudomonadota</taxon>
        <taxon>Betaproteobacteria</taxon>
        <taxon>Burkholderiales</taxon>
        <taxon>Burkholderiaceae</taxon>
        <taxon>Burkholderia</taxon>
        <taxon>Burkholderia cepacia complex</taxon>
    </lineage>
</organism>
<accession>Q39K92</accession>
<evidence type="ECO:0000255" key="1">
    <source>
        <dbReference type="HAMAP-Rule" id="MF_01018"/>
    </source>
</evidence>
<sequence>MTAPLTLALSKGRIFEETLPLLAAAGVQVTEDPETSRKLILPTTNPDLRVIIVRASDVPTYVEYGAADFGVAGKDVLVEHGGSGLYQPIDLNIARCRMSVAVSAGFDYASAVRQGARLRVATKYVETAREHFAAKGVHVDLIKLYGSMELAPLVGLADAIVDLVSSGGTLKANNLVEVEEIMAISSRLVVNQAALKLKRTALKPILDAFERASQNGG</sequence>
<protein>
    <recommendedName>
        <fullName evidence="1">ATP phosphoribosyltransferase</fullName>
        <shortName evidence="1">ATP-PRT</shortName>
        <shortName evidence="1">ATP-PRTase</shortName>
        <ecNumber evidence="1">2.4.2.17</ecNumber>
    </recommendedName>
</protein>
<proteinExistence type="inferred from homology"/>
<keyword id="KW-0028">Amino-acid biosynthesis</keyword>
<keyword id="KW-0067">ATP-binding</keyword>
<keyword id="KW-0963">Cytoplasm</keyword>
<keyword id="KW-0328">Glycosyltransferase</keyword>
<keyword id="KW-0368">Histidine biosynthesis</keyword>
<keyword id="KW-0547">Nucleotide-binding</keyword>
<keyword id="KW-0808">Transferase</keyword>
<comment type="function">
    <text evidence="1">Catalyzes the condensation of ATP and 5-phosphoribose 1-diphosphate to form N'-(5'-phosphoribosyl)-ATP (PR-ATP). Has a crucial role in the pathway because the rate of histidine biosynthesis seems to be controlled primarily by regulation of HisG enzymatic activity.</text>
</comment>
<comment type="catalytic activity">
    <reaction evidence="1">
        <text>1-(5-phospho-beta-D-ribosyl)-ATP + diphosphate = 5-phospho-alpha-D-ribose 1-diphosphate + ATP</text>
        <dbReference type="Rhea" id="RHEA:18473"/>
        <dbReference type="ChEBI" id="CHEBI:30616"/>
        <dbReference type="ChEBI" id="CHEBI:33019"/>
        <dbReference type="ChEBI" id="CHEBI:58017"/>
        <dbReference type="ChEBI" id="CHEBI:73183"/>
        <dbReference type="EC" id="2.4.2.17"/>
    </reaction>
</comment>
<comment type="pathway">
    <text evidence="1">Amino-acid biosynthesis; L-histidine biosynthesis; L-histidine from 5-phospho-alpha-D-ribose 1-diphosphate: step 1/9.</text>
</comment>
<comment type="subunit">
    <text evidence="1">Heteromultimer composed of HisG and HisZ subunits.</text>
</comment>
<comment type="subcellular location">
    <subcellularLocation>
        <location evidence="1">Cytoplasm</location>
    </subcellularLocation>
</comment>
<comment type="domain">
    <text>Lacks the C-terminal regulatory region which is replaced by HisZ.</text>
</comment>
<comment type="similarity">
    <text evidence="1">Belongs to the ATP phosphoribosyltransferase family. Short subfamily.</text>
</comment>
<reference key="1">
    <citation type="submission" date="2005-10" db="EMBL/GenBank/DDBJ databases">
        <title>Complete sequence of chromosome 1 of Burkholderia sp. 383.</title>
        <authorList>
            <consortium name="US DOE Joint Genome Institute"/>
            <person name="Copeland A."/>
            <person name="Lucas S."/>
            <person name="Lapidus A."/>
            <person name="Barry K."/>
            <person name="Detter J.C."/>
            <person name="Glavina T."/>
            <person name="Hammon N."/>
            <person name="Israni S."/>
            <person name="Pitluck S."/>
            <person name="Chain P."/>
            <person name="Malfatti S."/>
            <person name="Shin M."/>
            <person name="Vergez L."/>
            <person name="Schmutz J."/>
            <person name="Larimer F."/>
            <person name="Land M."/>
            <person name="Kyrpides N."/>
            <person name="Lykidis A."/>
            <person name="Richardson P."/>
        </authorList>
    </citation>
    <scope>NUCLEOTIDE SEQUENCE [LARGE SCALE GENOMIC DNA]</scope>
    <source>
        <strain>ATCC 17760 / DSM 23089 / LMG 22485 / NCIMB 9086 / R18194 / 383</strain>
    </source>
</reference>
<dbReference type="EC" id="2.4.2.17" evidence="1"/>
<dbReference type="EMBL" id="CP000151">
    <property type="protein sequence ID" value="ABB07124.1"/>
    <property type="molecule type" value="Genomic_DNA"/>
</dbReference>
<dbReference type="RefSeq" id="WP_011350725.1">
    <property type="nucleotide sequence ID" value="NZ_WNDV01000034.1"/>
</dbReference>
<dbReference type="SMR" id="Q39K92"/>
<dbReference type="GeneID" id="93193373"/>
<dbReference type="KEGG" id="bur:Bcep18194_A3522"/>
<dbReference type="HOGENOM" id="CLU_038115_2_0_4"/>
<dbReference type="UniPathway" id="UPA00031">
    <property type="reaction ID" value="UER00006"/>
</dbReference>
<dbReference type="Proteomes" id="UP000002705">
    <property type="component" value="Chromosome 1"/>
</dbReference>
<dbReference type="GO" id="GO:0005737">
    <property type="term" value="C:cytoplasm"/>
    <property type="evidence" value="ECO:0007669"/>
    <property type="project" value="UniProtKB-SubCell"/>
</dbReference>
<dbReference type="GO" id="GO:0005524">
    <property type="term" value="F:ATP binding"/>
    <property type="evidence" value="ECO:0007669"/>
    <property type="project" value="UniProtKB-KW"/>
</dbReference>
<dbReference type="GO" id="GO:0003879">
    <property type="term" value="F:ATP phosphoribosyltransferase activity"/>
    <property type="evidence" value="ECO:0007669"/>
    <property type="project" value="UniProtKB-UniRule"/>
</dbReference>
<dbReference type="GO" id="GO:0000105">
    <property type="term" value="P:L-histidine biosynthetic process"/>
    <property type="evidence" value="ECO:0007669"/>
    <property type="project" value="UniProtKB-UniRule"/>
</dbReference>
<dbReference type="CDD" id="cd13595">
    <property type="entry name" value="PBP2_HisGs"/>
    <property type="match status" value="1"/>
</dbReference>
<dbReference type="FunFam" id="3.40.190.10:FF:000011">
    <property type="entry name" value="ATP phosphoribosyltransferase"/>
    <property type="match status" value="1"/>
</dbReference>
<dbReference type="Gene3D" id="3.40.190.10">
    <property type="entry name" value="Periplasmic binding protein-like II"/>
    <property type="match status" value="2"/>
</dbReference>
<dbReference type="HAMAP" id="MF_01018">
    <property type="entry name" value="HisG_Short"/>
    <property type="match status" value="1"/>
</dbReference>
<dbReference type="InterPro" id="IPR013820">
    <property type="entry name" value="ATP_PRibTrfase_cat"/>
</dbReference>
<dbReference type="InterPro" id="IPR018198">
    <property type="entry name" value="ATP_PRibTrfase_CS"/>
</dbReference>
<dbReference type="InterPro" id="IPR001348">
    <property type="entry name" value="ATP_PRibTrfase_HisG"/>
</dbReference>
<dbReference type="InterPro" id="IPR024893">
    <property type="entry name" value="ATP_PRibTrfase_HisG_short"/>
</dbReference>
<dbReference type="NCBIfam" id="TIGR00070">
    <property type="entry name" value="hisG"/>
    <property type="match status" value="1"/>
</dbReference>
<dbReference type="PANTHER" id="PTHR21403:SF8">
    <property type="entry name" value="ATP PHOSPHORIBOSYLTRANSFERASE"/>
    <property type="match status" value="1"/>
</dbReference>
<dbReference type="PANTHER" id="PTHR21403">
    <property type="entry name" value="ATP PHOSPHORIBOSYLTRANSFERASE ATP-PRTASE"/>
    <property type="match status" value="1"/>
</dbReference>
<dbReference type="Pfam" id="PF01634">
    <property type="entry name" value="HisG"/>
    <property type="match status" value="1"/>
</dbReference>
<dbReference type="SUPFAM" id="SSF53850">
    <property type="entry name" value="Periplasmic binding protein-like II"/>
    <property type="match status" value="1"/>
</dbReference>
<dbReference type="PROSITE" id="PS01316">
    <property type="entry name" value="ATP_P_PHORIBOSYLTR"/>
    <property type="match status" value="1"/>
</dbReference>